<protein>
    <recommendedName>
        <fullName evidence="1">Endo-type membrane-bound lytic murein transglycosylase A</fullName>
        <ecNumber evidence="1">4.2.2.n2</ecNumber>
    </recommendedName>
    <alternativeName>
        <fullName evidence="1">Peptidoglycan lytic endotransglycosylase</fullName>
    </alternativeName>
</protein>
<name>EMTA_ECODH</name>
<gene>
    <name evidence="1" type="primary">emtA</name>
    <name type="ordered locus">ECDH10B_1246</name>
</gene>
<reference key="1">
    <citation type="journal article" date="2008" name="J. Bacteriol.">
        <title>The complete genome sequence of Escherichia coli DH10B: insights into the biology of a laboratory workhorse.</title>
        <authorList>
            <person name="Durfee T."/>
            <person name="Nelson R."/>
            <person name="Baldwin S."/>
            <person name="Plunkett G. III"/>
            <person name="Burland V."/>
            <person name="Mau B."/>
            <person name="Petrosino J.F."/>
            <person name="Qin X."/>
            <person name="Muzny D.M."/>
            <person name="Ayele M."/>
            <person name="Gibbs R.A."/>
            <person name="Csorgo B."/>
            <person name="Posfai G."/>
            <person name="Weinstock G.M."/>
            <person name="Blattner F.R."/>
        </authorList>
    </citation>
    <scope>NUCLEOTIDE SEQUENCE [LARGE SCALE GENOMIC DNA]</scope>
    <source>
        <strain>K12 / DH10B</strain>
    </source>
</reference>
<evidence type="ECO:0000255" key="1">
    <source>
        <dbReference type="HAMAP-Rule" id="MF_01381"/>
    </source>
</evidence>
<dbReference type="EC" id="4.2.2.n2" evidence="1"/>
<dbReference type="EMBL" id="CP000948">
    <property type="protein sequence ID" value="ACB02363.1"/>
    <property type="molecule type" value="Genomic_DNA"/>
</dbReference>
<dbReference type="RefSeq" id="WP_001301104.1">
    <property type="nucleotide sequence ID" value="NC_010473.1"/>
</dbReference>
<dbReference type="SMR" id="B1XAN4"/>
<dbReference type="CAZy" id="GH23">
    <property type="family name" value="Glycoside Hydrolase Family 23"/>
</dbReference>
<dbReference type="GeneID" id="93776239"/>
<dbReference type="KEGG" id="ecd:ECDH10B_1246"/>
<dbReference type="HOGENOM" id="CLU_103257_0_0_6"/>
<dbReference type="GO" id="GO:0009279">
    <property type="term" value="C:cell outer membrane"/>
    <property type="evidence" value="ECO:0007669"/>
    <property type="project" value="UniProtKB-SubCell"/>
</dbReference>
<dbReference type="GO" id="GO:0008932">
    <property type="term" value="F:lytic endotransglycosylase activity"/>
    <property type="evidence" value="ECO:0007669"/>
    <property type="project" value="InterPro"/>
</dbReference>
<dbReference type="GO" id="GO:0016998">
    <property type="term" value="P:cell wall macromolecule catabolic process"/>
    <property type="evidence" value="ECO:0007669"/>
    <property type="project" value="UniProtKB-UniRule"/>
</dbReference>
<dbReference type="GO" id="GO:0071555">
    <property type="term" value="P:cell wall organization"/>
    <property type="evidence" value="ECO:0007669"/>
    <property type="project" value="UniProtKB-KW"/>
</dbReference>
<dbReference type="GO" id="GO:0000270">
    <property type="term" value="P:peptidoglycan metabolic process"/>
    <property type="evidence" value="ECO:0007669"/>
    <property type="project" value="InterPro"/>
</dbReference>
<dbReference type="CDD" id="cd16893">
    <property type="entry name" value="LT_MltC_MltE"/>
    <property type="match status" value="1"/>
</dbReference>
<dbReference type="FunFam" id="1.10.530.10:FF:000007">
    <property type="entry name" value="Endo-type membrane-bound lytic murein transglycosylase A"/>
    <property type="match status" value="1"/>
</dbReference>
<dbReference type="Gene3D" id="1.10.530.10">
    <property type="match status" value="1"/>
</dbReference>
<dbReference type="HAMAP" id="MF_01381">
    <property type="entry name" value="EmtA"/>
    <property type="match status" value="1"/>
</dbReference>
<dbReference type="InterPro" id="IPR023946">
    <property type="entry name" value="EmtA"/>
</dbReference>
<dbReference type="InterPro" id="IPR023346">
    <property type="entry name" value="Lysozyme-like_dom_sf"/>
</dbReference>
<dbReference type="InterPro" id="IPR000189">
    <property type="entry name" value="Transglyc_AS"/>
</dbReference>
<dbReference type="InterPro" id="IPR008258">
    <property type="entry name" value="Transglycosylase_SLT_dom_1"/>
</dbReference>
<dbReference type="NCBIfam" id="NF012014">
    <property type="entry name" value="PRK15470.1"/>
    <property type="match status" value="1"/>
</dbReference>
<dbReference type="PANTHER" id="PTHR37423:SF4">
    <property type="entry name" value="ENDO-TYPE MEMBRANE-BOUND LYTIC MUREIN TRANSGLYCOSYLASE A"/>
    <property type="match status" value="1"/>
</dbReference>
<dbReference type="PANTHER" id="PTHR37423">
    <property type="entry name" value="SOLUBLE LYTIC MUREIN TRANSGLYCOSYLASE-RELATED"/>
    <property type="match status" value="1"/>
</dbReference>
<dbReference type="Pfam" id="PF01464">
    <property type="entry name" value="SLT"/>
    <property type="match status" value="1"/>
</dbReference>
<dbReference type="SUPFAM" id="SSF53955">
    <property type="entry name" value="Lysozyme-like"/>
    <property type="match status" value="1"/>
</dbReference>
<dbReference type="PROSITE" id="PS51257">
    <property type="entry name" value="PROKAR_LIPOPROTEIN"/>
    <property type="match status" value="1"/>
</dbReference>
<dbReference type="PROSITE" id="PS00922">
    <property type="entry name" value="TRANSGLYCOSYLASE"/>
    <property type="match status" value="1"/>
</dbReference>
<accession>B1XAN4</accession>
<proteinExistence type="inferred from homology"/>
<feature type="signal peptide" evidence="1">
    <location>
        <begin position="1"/>
        <end position="15"/>
    </location>
</feature>
<feature type="chain" id="PRO_1000144953" description="Endo-type membrane-bound lytic murein transglycosylase A">
    <location>
        <begin position="16"/>
        <end position="203"/>
    </location>
</feature>
<feature type="lipid moiety-binding region" description="N-palmitoyl cysteine" evidence="1">
    <location>
        <position position="16"/>
    </location>
</feature>
<feature type="lipid moiety-binding region" description="S-diacylglycerol cysteine" evidence="1">
    <location>
        <position position="16"/>
    </location>
</feature>
<comment type="function">
    <text evidence="1">Murein-degrading enzyme. May play a role in recycling of muropeptides during cell elongation and/or cell division. Preferentially cleaves at a distance of more than two disaccharide units from the ends of the glycan chain.</text>
</comment>
<comment type="catalytic activity">
    <reaction evidence="1">
        <text>Endolytic cleavage of the (1-&gt;4)-beta-glycosidic linkage between N-acetylmuramic acid (MurNAc) and N-acetylglucosamine (GlcNAc) residues in peptidoglycan with concomitant formation of a 1,6-anhydrobond in the MurNAc residue.</text>
        <dbReference type="EC" id="4.2.2.n2"/>
    </reaction>
</comment>
<comment type="subcellular location">
    <subcellularLocation>
        <location evidence="1">Cell outer membrane</location>
        <topology evidence="1">Lipid-anchor</topology>
    </subcellularLocation>
</comment>
<comment type="similarity">
    <text evidence="1">Belongs to the transglycosylase Slt family.</text>
</comment>
<sequence length="203" mass="22227">MKLRWFAFLIVLLAGCSSKHDYTNPPWNAKVPVQRAMQWMPISQKAGAAWGVDPQLITAIIAIESGGNPNAVSKSNAIGLMQLKASTSGRDVYRRMGWSGEPTTSELKNPERNISMGAAYLNILETGPLAGIEDPKVLQYALVVSYANGAGALLRTFSSDRKKAISKINDLDADEFLEHVARNHPAPQAPRYIYKLEQALDAM</sequence>
<keyword id="KW-0998">Cell outer membrane</keyword>
<keyword id="KW-0961">Cell wall biogenesis/degradation</keyword>
<keyword id="KW-0449">Lipoprotein</keyword>
<keyword id="KW-0456">Lyase</keyword>
<keyword id="KW-0472">Membrane</keyword>
<keyword id="KW-0564">Palmitate</keyword>
<keyword id="KW-0732">Signal</keyword>
<organism>
    <name type="scientific">Escherichia coli (strain K12 / DH10B)</name>
    <dbReference type="NCBI Taxonomy" id="316385"/>
    <lineage>
        <taxon>Bacteria</taxon>
        <taxon>Pseudomonadati</taxon>
        <taxon>Pseudomonadota</taxon>
        <taxon>Gammaproteobacteria</taxon>
        <taxon>Enterobacterales</taxon>
        <taxon>Enterobacteriaceae</taxon>
        <taxon>Escherichia</taxon>
    </lineage>
</organism>